<proteinExistence type="inferred from homology"/>
<sequence>MAKVYYEKDVTVNVLKEKKVAIIGYGSQGHAHAQNLRDNGFDVVVGLRKGKSWDKAKEDGFSVYTVAEAAKQADVVMILLPDELQPEVYEAEIAPNLQAGNSLVFAHGFNVHFDQVKPPANVDVFLVAPKGPGHLVRRTFSEGGAVPALFAVYQDATGVATEKALSYADGIGATRAGVLETTFKEETETDLFGEQAVLCGGVTALVKAGFETLVDAGYQPELAYFECLHELKLIVDLMYEGGLENMRYSVSDTAQWGDFVSGPRVVTEDTKKAMGTVLAEIQDGTFARGWIAEHKAGRPNFHATNEKENEHEIEVVGRKLREMMPFVQPRVKVGMK</sequence>
<keyword id="KW-0028">Amino-acid biosynthesis</keyword>
<keyword id="KW-0100">Branched-chain amino acid biosynthesis</keyword>
<keyword id="KW-0460">Magnesium</keyword>
<keyword id="KW-0479">Metal-binding</keyword>
<keyword id="KW-0521">NADP</keyword>
<keyword id="KW-0560">Oxidoreductase</keyword>
<dbReference type="EC" id="1.1.1.86" evidence="1"/>
<dbReference type="EMBL" id="AE017194">
    <property type="protein sequence ID" value="AAS40448.1"/>
    <property type="molecule type" value="Genomic_DNA"/>
</dbReference>
<dbReference type="SMR" id="Q73BA1"/>
<dbReference type="KEGG" id="bca:BCE_1519"/>
<dbReference type="HOGENOM" id="CLU_033821_0_1_9"/>
<dbReference type="UniPathway" id="UPA00047">
    <property type="reaction ID" value="UER00056"/>
</dbReference>
<dbReference type="UniPathway" id="UPA00049">
    <property type="reaction ID" value="UER00060"/>
</dbReference>
<dbReference type="Proteomes" id="UP000002527">
    <property type="component" value="Chromosome"/>
</dbReference>
<dbReference type="GO" id="GO:0005829">
    <property type="term" value="C:cytosol"/>
    <property type="evidence" value="ECO:0007669"/>
    <property type="project" value="TreeGrafter"/>
</dbReference>
<dbReference type="GO" id="GO:0004455">
    <property type="term" value="F:ketol-acid reductoisomerase activity"/>
    <property type="evidence" value="ECO:0007669"/>
    <property type="project" value="UniProtKB-UniRule"/>
</dbReference>
<dbReference type="GO" id="GO:0000287">
    <property type="term" value="F:magnesium ion binding"/>
    <property type="evidence" value="ECO:0007669"/>
    <property type="project" value="UniProtKB-UniRule"/>
</dbReference>
<dbReference type="GO" id="GO:0050661">
    <property type="term" value="F:NADP binding"/>
    <property type="evidence" value="ECO:0007669"/>
    <property type="project" value="InterPro"/>
</dbReference>
<dbReference type="GO" id="GO:0009097">
    <property type="term" value="P:isoleucine biosynthetic process"/>
    <property type="evidence" value="ECO:0007669"/>
    <property type="project" value="UniProtKB-UniRule"/>
</dbReference>
<dbReference type="GO" id="GO:0009099">
    <property type="term" value="P:L-valine biosynthetic process"/>
    <property type="evidence" value="ECO:0007669"/>
    <property type="project" value="UniProtKB-UniRule"/>
</dbReference>
<dbReference type="FunFam" id="3.40.50.720:FF:000023">
    <property type="entry name" value="Ketol-acid reductoisomerase (NADP(+))"/>
    <property type="match status" value="1"/>
</dbReference>
<dbReference type="Gene3D" id="6.10.240.10">
    <property type="match status" value="1"/>
</dbReference>
<dbReference type="Gene3D" id="3.40.50.720">
    <property type="entry name" value="NAD(P)-binding Rossmann-like Domain"/>
    <property type="match status" value="1"/>
</dbReference>
<dbReference type="HAMAP" id="MF_00435">
    <property type="entry name" value="IlvC"/>
    <property type="match status" value="1"/>
</dbReference>
<dbReference type="InterPro" id="IPR008927">
    <property type="entry name" value="6-PGluconate_DH-like_C_sf"/>
</dbReference>
<dbReference type="InterPro" id="IPR013023">
    <property type="entry name" value="KARI"/>
</dbReference>
<dbReference type="InterPro" id="IPR000506">
    <property type="entry name" value="KARI_C"/>
</dbReference>
<dbReference type="InterPro" id="IPR013116">
    <property type="entry name" value="KARI_N"/>
</dbReference>
<dbReference type="InterPro" id="IPR014359">
    <property type="entry name" value="KARI_prok"/>
</dbReference>
<dbReference type="InterPro" id="IPR036291">
    <property type="entry name" value="NAD(P)-bd_dom_sf"/>
</dbReference>
<dbReference type="NCBIfam" id="TIGR00465">
    <property type="entry name" value="ilvC"/>
    <property type="match status" value="1"/>
</dbReference>
<dbReference type="NCBIfam" id="NF004017">
    <property type="entry name" value="PRK05479.1"/>
    <property type="match status" value="1"/>
</dbReference>
<dbReference type="NCBIfam" id="NF009940">
    <property type="entry name" value="PRK13403.1"/>
    <property type="match status" value="1"/>
</dbReference>
<dbReference type="PANTHER" id="PTHR21371">
    <property type="entry name" value="KETOL-ACID REDUCTOISOMERASE, MITOCHONDRIAL"/>
    <property type="match status" value="1"/>
</dbReference>
<dbReference type="PANTHER" id="PTHR21371:SF1">
    <property type="entry name" value="KETOL-ACID REDUCTOISOMERASE, MITOCHONDRIAL"/>
    <property type="match status" value="1"/>
</dbReference>
<dbReference type="Pfam" id="PF01450">
    <property type="entry name" value="KARI_C"/>
    <property type="match status" value="1"/>
</dbReference>
<dbReference type="Pfam" id="PF07991">
    <property type="entry name" value="KARI_N"/>
    <property type="match status" value="1"/>
</dbReference>
<dbReference type="PIRSF" id="PIRSF000116">
    <property type="entry name" value="IlvC_gammaproteo"/>
    <property type="match status" value="1"/>
</dbReference>
<dbReference type="SUPFAM" id="SSF48179">
    <property type="entry name" value="6-phosphogluconate dehydrogenase C-terminal domain-like"/>
    <property type="match status" value="1"/>
</dbReference>
<dbReference type="SUPFAM" id="SSF51735">
    <property type="entry name" value="NAD(P)-binding Rossmann-fold domains"/>
    <property type="match status" value="1"/>
</dbReference>
<dbReference type="PROSITE" id="PS51851">
    <property type="entry name" value="KARI_C"/>
    <property type="match status" value="1"/>
</dbReference>
<dbReference type="PROSITE" id="PS51850">
    <property type="entry name" value="KARI_N"/>
    <property type="match status" value="1"/>
</dbReference>
<comment type="function">
    <text evidence="1">Involved in the biosynthesis of branched-chain amino acids (BCAA). Catalyzes an alkyl-migration followed by a ketol-acid reduction of (S)-2-acetolactate (S2AL) to yield (R)-2,3-dihydroxy-isovalerate. In the isomerase reaction, S2AL is rearranged via a Mg-dependent methyl migration to produce 3-hydroxy-3-methyl-2-ketobutyrate (HMKB). In the reductase reaction, this 2-ketoacid undergoes a metal-dependent reduction by NADPH to yield (R)-2,3-dihydroxy-isovalerate.</text>
</comment>
<comment type="catalytic activity">
    <reaction evidence="1">
        <text>(2R)-2,3-dihydroxy-3-methylbutanoate + NADP(+) = (2S)-2-acetolactate + NADPH + H(+)</text>
        <dbReference type="Rhea" id="RHEA:22068"/>
        <dbReference type="ChEBI" id="CHEBI:15378"/>
        <dbReference type="ChEBI" id="CHEBI:49072"/>
        <dbReference type="ChEBI" id="CHEBI:57783"/>
        <dbReference type="ChEBI" id="CHEBI:58349"/>
        <dbReference type="ChEBI" id="CHEBI:58476"/>
        <dbReference type="EC" id="1.1.1.86"/>
    </reaction>
</comment>
<comment type="catalytic activity">
    <reaction evidence="1">
        <text>(2R,3R)-2,3-dihydroxy-3-methylpentanoate + NADP(+) = (S)-2-ethyl-2-hydroxy-3-oxobutanoate + NADPH + H(+)</text>
        <dbReference type="Rhea" id="RHEA:13493"/>
        <dbReference type="ChEBI" id="CHEBI:15378"/>
        <dbReference type="ChEBI" id="CHEBI:49256"/>
        <dbReference type="ChEBI" id="CHEBI:49258"/>
        <dbReference type="ChEBI" id="CHEBI:57783"/>
        <dbReference type="ChEBI" id="CHEBI:58349"/>
        <dbReference type="EC" id="1.1.1.86"/>
    </reaction>
</comment>
<comment type="cofactor">
    <cofactor evidence="1">
        <name>Mg(2+)</name>
        <dbReference type="ChEBI" id="CHEBI:18420"/>
    </cofactor>
    <text evidence="1">Binds 2 magnesium ions per subunit.</text>
</comment>
<comment type="pathway">
    <text evidence="1">Amino-acid biosynthesis; L-isoleucine biosynthesis; L-isoleucine from 2-oxobutanoate: step 2/4.</text>
</comment>
<comment type="pathway">
    <text evidence="1">Amino-acid biosynthesis; L-valine biosynthesis; L-valine from pyruvate: step 2/4.</text>
</comment>
<comment type="similarity">
    <text evidence="1">Belongs to the ketol-acid reductoisomerase family.</text>
</comment>
<accession>Q73BA1</accession>
<name>ILVC1_BACC1</name>
<feature type="chain" id="PRO_0000151272" description="Ketol-acid reductoisomerase (NADP(+)) 1">
    <location>
        <begin position="1"/>
        <end position="336"/>
    </location>
</feature>
<feature type="domain" description="KARI N-terminal Rossmann" evidence="2">
    <location>
        <begin position="2"/>
        <end position="181"/>
    </location>
</feature>
<feature type="domain" description="KARI C-terminal knotted" evidence="3">
    <location>
        <begin position="182"/>
        <end position="327"/>
    </location>
</feature>
<feature type="active site" evidence="1">
    <location>
        <position position="107"/>
    </location>
</feature>
<feature type="binding site" evidence="1">
    <location>
        <begin position="25"/>
        <end position="28"/>
    </location>
    <ligand>
        <name>NADP(+)</name>
        <dbReference type="ChEBI" id="CHEBI:58349"/>
    </ligand>
</feature>
<feature type="binding site" evidence="1">
    <location>
        <position position="48"/>
    </location>
    <ligand>
        <name>NADP(+)</name>
        <dbReference type="ChEBI" id="CHEBI:58349"/>
    </ligand>
</feature>
<feature type="binding site" evidence="1">
    <location>
        <position position="52"/>
    </location>
    <ligand>
        <name>NADP(+)</name>
        <dbReference type="ChEBI" id="CHEBI:58349"/>
    </ligand>
</feature>
<feature type="binding site" evidence="1">
    <location>
        <begin position="82"/>
        <end position="85"/>
    </location>
    <ligand>
        <name>NADP(+)</name>
        <dbReference type="ChEBI" id="CHEBI:58349"/>
    </ligand>
</feature>
<feature type="binding site" evidence="1">
    <location>
        <position position="133"/>
    </location>
    <ligand>
        <name>NADP(+)</name>
        <dbReference type="ChEBI" id="CHEBI:58349"/>
    </ligand>
</feature>
<feature type="binding site" evidence="1">
    <location>
        <position position="190"/>
    </location>
    <ligand>
        <name>Mg(2+)</name>
        <dbReference type="ChEBI" id="CHEBI:18420"/>
        <label>1</label>
    </ligand>
</feature>
<feature type="binding site" evidence="1">
    <location>
        <position position="190"/>
    </location>
    <ligand>
        <name>Mg(2+)</name>
        <dbReference type="ChEBI" id="CHEBI:18420"/>
        <label>2</label>
    </ligand>
</feature>
<feature type="binding site" evidence="1">
    <location>
        <position position="194"/>
    </location>
    <ligand>
        <name>Mg(2+)</name>
        <dbReference type="ChEBI" id="CHEBI:18420"/>
        <label>1</label>
    </ligand>
</feature>
<feature type="binding site" evidence="1">
    <location>
        <position position="226"/>
    </location>
    <ligand>
        <name>Mg(2+)</name>
        <dbReference type="ChEBI" id="CHEBI:18420"/>
        <label>2</label>
    </ligand>
</feature>
<feature type="binding site" evidence="1">
    <location>
        <position position="230"/>
    </location>
    <ligand>
        <name>Mg(2+)</name>
        <dbReference type="ChEBI" id="CHEBI:18420"/>
        <label>2</label>
    </ligand>
</feature>
<feature type="binding site" evidence="1">
    <location>
        <position position="251"/>
    </location>
    <ligand>
        <name>substrate</name>
    </ligand>
</feature>
<organism>
    <name type="scientific">Bacillus cereus (strain ATCC 10987 / NRS 248)</name>
    <dbReference type="NCBI Taxonomy" id="222523"/>
    <lineage>
        <taxon>Bacteria</taxon>
        <taxon>Bacillati</taxon>
        <taxon>Bacillota</taxon>
        <taxon>Bacilli</taxon>
        <taxon>Bacillales</taxon>
        <taxon>Bacillaceae</taxon>
        <taxon>Bacillus</taxon>
        <taxon>Bacillus cereus group</taxon>
    </lineage>
</organism>
<reference key="1">
    <citation type="journal article" date="2004" name="Nucleic Acids Res.">
        <title>The genome sequence of Bacillus cereus ATCC 10987 reveals metabolic adaptations and a large plasmid related to Bacillus anthracis pXO1.</title>
        <authorList>
            <person name="Rasko D.A."/>
            <person name="Ravel J."/>
            <person name="Oekstad O.A."/>
            <person name="Helgason E."/>
            <person name="Cer R.Z."/>
            <person name="Jiang L."/>
            <person name="Shores K.A."/>
            <person name="Fouts D.E."/>
            <person name="Tourasse N.J."/>
            <person name="Angiuoli S.V."/>
            <person name="Kolonay J.F."/>
            <person name="Nelson W.C."/>
            <person name="Kolstoe A.-B."/>
            <person name="Fraser C.M."/>
            <person name="Read T.D."/>
        </authorList>
    </citation>
    <scope>NUCLEOTIDE SEQUENCE [LARGE SCALE GENOMIC DNA]</scope>
    <source>
        <strain>ATCC 10987 / NRS 248</strain>
    </source>
</reference>
<gene>
    <name evidence="1" type="primary">ilvC1</name>
    <name type="ordered locus">BCE_1519</name>
</gene>
<evidence type="ECO:0000255" key="1">
    <source>
        <dbReference type="HAMAP-Rule" id="MF_00435"/>
    </source>
</evidence>
<evidence type="ECO:0000255" key="2">
    <source>
        <dbReference type="PROSITE-ProRule" id="PRU01197"/>
    </source>
</evidence>
<evidence type="ECO:0000255" key="3">
    <source>
        <dbReference type="PROSITE-ProRule" id="PRU01198"/>
    </source>
</evidence>
<protein>
    <recommendedName>
        <fullName evidence="1">Ketol-acid reductoisomerase (NADP(+)) 1</fullName>
        <shortName evidence="1">KARI 1</shortName>
        <ecNumber evidence="1">1.1.1.86</ecNumber>
    </recommendedName>
    <alternativeName>
        <fullName evidence="1">Acetohydroxy-acid isomeroreductase 1</fullName>
        <shortName evidence="1">AHIR 1</shortName>
    </alternativeName>
    <alternativeName>
        <fullName evidence="1">Alpha-keto-beta-hydroxylacyl reductoisomerase 1</fullName>
    </alternativeName>
    <alternativeName>
        <fullName evidence="1">Ketol-acid reductoisomerase type 1</fullName>
    </alternativeName>
    <alternativeName>
        <fullName evidence="1">Ketol-acid reductoisomerase type I</fullName>
    </alternativeName>
</protein>